<reference key="1">
    <citation type="journal article" date="2002" name="Genome Res.">
        <title>The genome of Methanosarcina acetivorans reveals extensive metabolic and physiological diversity.</title>
        <authorList>
            <person name="Galagan J.E."/>
            <person name="Nusbaum C."/>
            <person name="Roy A."/>
            <person name="Endrizzi M.G."/>
            <person name="Macdonald P."/>
            <person name="FitzHugh W."/>
            <person name="Calvo S."/>
            <person name="Engels R."/>
            <person name="Smirnov S."/>
            <person name="Atnoor D."/>
            <person name="Brown A."/>
            <person name="Allen N."/>
            <person name="Naylor J."/>
            <person name="Stange-Thomann N."/>
            <person name="DeArellano K."/>
            <person name="Johnson R."/>
            <person name="Linton L."/>
            <person name="McEwan P."/>
            <person name="McKernan K."/>
            <person name="Talamas J."/>
            <person name="Tirrell A."/>
            <person name="Ye W."/>
            <person name="Zimmer A."/>
            <person name="Barber R.D."/>
            <person name="Cann I."/>
            <person name="Graham D.E."/>
            <person name="Grahame D.A."/>
            <person name="Guss A.M."/>
            <person name="Hedderich R."/>
            <person name="Ingram-Smith C."/>
            <person name="Kuettner H.C."/>
            <person name="Krzycki J.A."/>
            <person name="Leigh J.A."/>
            <person name="Li W."/>
            <person name="Liu J."/>
            <person name="Mukhopadhyay B."/>
            <person name="Reeve J.N."/>
            <person name="Smith K."/>
            <person name="Springer T.A."/>
            <person name="Umayam L.A."/>
            <person name="White O."/>
            <person name="White R.H."/>
            <person name="de Macario E.C."/>
            <person name="Ferry J.G."/>
            <person name="Jarrell K.F."/>
            <person name="Jing H."/>
            <person name="Macario A.J.L."/>
            <person name="Paulsen I.T."/>
            <person name="Pritchett M."/>
            <person name="Sowers K.R."/>
            <person name="Swanson R.V."/>
            <person name="Zinder S.H."/>
            <person name="Lander E."/>
            <person name="Metcalf W.W."/>
            <person name="Birren B."/>
        </authorList>
    </citation>
    <scope>NUCLEOTIDE SEQUENCE [LARGE SCALE GENOMIC DNA]</scope>
    <source>
        <strain>ATCC 35395 / DSM 2834 / JCM 12185 / C2A</strain>
    </source>
</reference>
<organism>
    <name type="scientific">Methanosarcina acetivorans (strain ATCC 35395 / DSM 2834 / JCM 12185 / C2A)</name>
    <dbReference type="NCBI Taxonomy" id="188937"/>
    <lineage>
        <taxon>Archaea</taxon>
        <taxon>Methanobacteriati</taxon>
        <taxon>Methanobacteriota</taxon>
        <taxon>Stenosarchaea group</taxon>
        <taxon>Methanomicrobia</taxon>
        <taxon>Methanosarcinales</taxon>
        <taxon>Methanosarcinaceae</taxon>
        <taxon>Methanosarcina</taxon>
    </lineage>
</organism>
<accession>Q8TS71</accession>
<keyword id="KW-0170">Cobalt</keyword>
<keyword id="KW-0479">Metal-binding</keyword>
<keyword id="KW-0484">Methanogenesis</keyword>
<keyword id="KW-1185">Reference proteome</keyword>
<keyword id="KW-0677">Repeat</keyword>
<gene>
    <name type="primary">mtbC2</name>
    <name type="ordered locus">MA_0934</name>
</gene>
<comment type="function">
    <text evidence="1">Acts as a methyl group carrier between MtbB and MtbA.</text>
</comment>
<comment type="pathway">
    <text>One-carbon metabolism; methanogenesis from dimethylamine.</text>
</comment>
<comment type="similarity">
    <text evidence="4">Belongs to the methylamine corrinoid protein family.</text>
</comment>
<comment type="sequence caution" evidence="4">
    <conflict type="erroneous initiation">
        <sequence resource="EMBL-CDS" id="AAM04367"/>
    </conflict>
</comment>
<name>MTBC2_METAC</name>
<feature type="chain" id="PRO_0000216476" description="Dimethylamine corrinoid protein 2">
    <location>
        <begin position="1"/>
        <end position="216"/>
    </location>
</feature>
<feature type="domain" description="B12-binding N-terminal" evidence="3">
    <location>
        <begin position="1"/>
        <end position="91"/>
    </location>
</feature>
<feature type="domain" description="B12-binding" evidence="2">
    <location>
        <begin position="92"/>
        <end position="216"/>
    </location>
</feature>
<feature type="binding site" description="axial binding residue" evidence="1">
    <location>
        <position position="105"/>
    </location>
    <ligand>
        <name>methylcob(III)alamin</name>
        <dbReference type="ChEBI" id="CHEBI:28115"/>
    </ligand>
    <ligandPart>
        <name>Co</name>
        <dbReference type="ChEBI" id="CHEBI:27638"/>
    </ligandPart>
</feature>
<sequence length="216" mass="23101">MASKEELLQELSDAIVSCKKDRVIAAVEKAKEVMEPAEIIEKGLAAGMNQVGTLFERGKLFLPHVMMAADSMTAGVNILEAEMPAGTETKKLGVIVNGTVEGDVHDIGKSIVSTMLQSAGFEVHDIGRDVPIKNFVEKAKEVNADMIGLSALMTTTMQGQRDVIELLKEEGMRERVKVMVGGAPATQAWADKIGADCYAENASEAVAKAKELLLGK</sequence>
<dbReference type="EMBL" id="AE010299">
    <property type="protein sequence ID" value="AAM04367.1"/>
    <property type="status" value="ALT_INIT"/>
    <property type="molecule type" value="Genomic_DNA"/>
</dbReference>
<dbReference type="RefSeq" id="WP_048065003.1">
    <property type="nucleotide sequence ID" value="NC_003552.1"/>
</dbReference>
<dbReference type="SMR" id="Q8TS71"/>
<dbReference type="STRING" id="188937.MA_0934"/>
<dbReference type="EnsemblBacteria" id="AAM04367">
    <property type="protein sequence ID" value="AAM04367"/>
    <property type="gene ID" value="MA_0934"/>
</dbReference>
<dbReference type="GeneID" id="1472824"/>
<dbReference type="KEGG" id="mac:MA_0934"/>
<dbReference type="HOGENOM" id="CLU_082102_1_0_2"/>
<dbReference type="InParanoid" id="Q8TS71"/>
<dbReference type="OrthoDB" id="134276at2157"/>
<dbReference type="PhylomeDB" id="Q8TS71"/>
<dbReference type="UniPathway" id="UPA00644"/>
<dbReference type="Proteomes" id="UP000002487">
    <property type="component" value="Chromosome"/>
</dbReference>
<dbReference type="GO" id="GO:0031419">
    <property type="term" value="F:cobalamin binding"/>
    <property type="evidence" value="ECO:0007669"/>
    <property type="project" value="InterPro"/>
</dbReference>
<dbReference type="GO" id="GO:0050897">
    <property type="term" value="F:cobalt ion binding"/>
    <property type="evidence" value="ECO:0007669"/>
    <property type="project" value="InterPro"/>
</dbReference>
<dbReference type="GO" id="GO:0008168">
    <property type="term" value="F:methyltransferase activity"/>
    <property type="evidence" value="ECO:0007669"/>
    <property type="project" value="UniProtKB-ARBA"/>
</dbReference>
<dbReference type="GO" id="GO:0015948">
    <property type="term" value="P:methanogenesis"/>
    <property type="evidence" value="ECO:0007669"/>
    <property type="project" value="UniProtKB-KW"/>
</dbReference>
<dbReference type="CDD" id="cd02070">
    <property type="entry name" value="corrinoid_protein_B12-BD"/>
    <property type="match status" value="1"/>
</dbReference>
<dbReference type="FunFam" id="3.40.50.280:FF:000003">
    <property type="entry name" value="Dimethylamine methyltransferase corrinoid protein"/>
    <property type="match status" value="1"/>
</dbReference>
<dbReference type="FunFam" id="1.10.1240.10:FF:000004">
    <property type="entry name" value="Monomethylamine methyltransferase corrinoid protein"/>
    <property type="match status" value="1"/>
</dbReference>
<dbReference type="Gene3D" id="3.40.50.280">
    <property type="entry name" value="Cobalamin-binding domain"/>
    <property type="match status" value="1"/>
</dbReference>
<dbReference type="Gene3D" id="1.10.1240.10">
    <property type="entry name" value="Methionine synthase domain"/>
    <property type="match status" value="1"/>
</dbReference>
<dbReference type="InterPro" id="IPR003759">
    <property type="entry name" value="Cbl-bd_cap"/>
</dbReference>
<dbReference type="InterPro" id="IPR006158">
    <property type="entry name" value="Cobalamin-bd"/>
</dbReference>
<dbReference type="InterPro" id="IPR036724">
    <property type="entry name" value="Cobalamin-bd_sf"/>
</dbReference>
<dbReference type="InterPro" id="IPR012741">
    <property type="entry name" value="Corrinoid_p"/>
</dbReference>
<dbReference type="InterPro" id="IPR048095">
    <property type="entry name" value="Dimeth_corrin_MtbC"/>
</dbReference>
<dbReference type="InterPro" id="IPR050554">
    <property type="entry name" value="Met_Synthase/Corrinoid"/>
</dbReference>
<dbReference type="InterPro" id="IPR036594">
    <property type="entry name" value="Meth_synthase_dom"/>
</dbReference>
<dbReference type="NCBIfam" id="NF041607">
    <property type="entry name" value="dimeth_corrin_MtbC"/>
    <property type="match status" value="1"/>
</dbReference>
<dbReference type="NCBIfam" id="TIGR02370">
    <property type="entry name" value="pyl_corrinoid"/>
    <property type="match status" value="1"/>
</dbReference>
<dbReference type="PANTHER" id="PTHR45833">
    <property type="entry name" value="METHIONINE SYNTHASE"/>
    <property type="match status" value="1"/>
</dbReference>
<dbReference type="PANTHER" id="PTHR45833:SF1">
    <property type="entry name" value="METHIONINE SYNTHASE"/>
    <property type="match status" value="1"/>
</dbReference>
<dbReference type="Pfam" id="PF02310">
    <property type="entry name" value="B12-binding"/>
    <property type="match status" value="1"/>
</dbReference>
<dbReference type="Pfam" id="PF02607">
    <property type="entry name" value="B12-binding_2"/>
    <property type="match status" value="1"/>
</dbReference>
<dbReference type="SMART" id="SM01018">
    <property type="entry name" value="B12-binding_2"/>
    <property type="match status" value="1"/>
</dbReference>
<dbReference type="SUPFAM" id="SSF52242">
    <property type="entry name" value="Cobalamin (vitamin B12)-binding domain"/>
    <property type="match status" value="1"/>
</dbReference>
<dbReference type="SUPFAM" id="SSF47644">
    <property type="entry name" value="Methionine synthase domain"/>
    <property type="match status" value="1"/>
</dbReference>
<dbReference type="PROSITE" id="PS51332">
    <property type="entry name" value="B12_BINDING"/>
    <property type="match status" value="1"/>
</dbReference>
<dbReference type="PROSITE" id="PS51337">
    <property type="entry name" value="B12_BINDING_NTER"/>
    <property type="match status" value="1"/>
</dbReference>
<evidence type="ECO:0000250" key="1"/>
<evidence type="ECO:0000255" key="2">
    <source>
        <dbReference type="PROSITE-ProRule" id="PRU00666"/>
    </source>
</evidence>
<evidence type="ECO:0000255" key="3">
    <source>
        <dbReference type="PROSITE-ProRule" id="PRU00667"/>
    </source>
</evidence>
<evidence type="ECO:0000305" key="4"/>
<proteinExistence type="inferred from homology"/>
<protein>
    <recommendedName>
        <fullName>Dimethylamine corrinoid protein 2</fullName>
    </recommendedName>
</protein>